<accession>Q15WG2</accession>
<protein>
    <recommendedName>
        <fullName evidence="1">Elongation factor Ts</fullName>
        <shortName evidence="1">EF-Ts</shortName>
    </recommendedName>
</protein>
<dbReference type="EMBL" id="CP000388">
    <property type="protein sequence ID" value="ABG39776.1"/>
    <property type="molecule type" value="Genomic_DNA"/>
</dbReference>
<dbReference type="RefSeq" id="WP_011574103.1">
    <property type="nucleotide sequence ID" value="NC_008228.1"/>
</dbReference>
<dbReference type="SMR" id="Q15WG2"/>
<dbReference type="STRING" id="342610.Patl_1250"/>
<dbReference type="KEGG" id="pat:Patl_1250"/>
<dbReference type="eggNOG" id="COG0264">
    <property type="taxonomic scope" value="Bacteria"/>
</dbReference>
<dbReference type="HOGENOM" id="CLU_047155_0_2_6"/>
<dbReference type="OrthoDB" id="9808348at2"/>
<dbReference type="Proteomes" id="UP000001981">
    <property type="component" value="Chromosome"/>
</dbReference>
<dbReference type="GO" id="GO:0005737">
    <property type="term" value="C:cytoplasm"/>
    <property type="evidence" value="ECO:0007669"/>
    <property type="project" value="UniProtKB-SubCell"/>
</dbReference>
<dbReference type="GO" id="GO:0003746">
    <property type="term" value="F:translation elongation factor activity"/>
    <property type="evidence" value="ECO:0007669"/>
    <property type="project" value="UniProtKB-UniRule"/>
</dbReference>
<dbReference type="CDD" id="cd14275">
    <property type="entry name" value="UBA_EF-Ts"/>
    <property type="match status" value="1"/>
</dbReference>
<dbReference type="FunFam" id="1.10.286.20:FF:000001">
    <property type="entry name" value="Elongation factor Ts"/>
    <property type="match status" value="1"/>
</dbReference>
<dbReference type="FunFam" id="1.10.8.10:FF:000001">
    <property type="entry name" value="Elongation factor Ts"/>
    <property type="match status" value="1"/>
</dbReference>
<dbReference type="Gene3D" id="1.10.286.20">
    <property type="match status" value="1"/>
</dbReference>
<dbReference type="Gene3D" id="1.10.8.10">
    <property type="entry name" value="DNA helicase RuvA subunit, C-terminal domain"/>
    <property type="match status" value="1"/>
</dbReference>
<dbReference type="Gene3D" id="3.30.479.20">
    <property type="entry name" value="Elongation factor Ts, dimerisation domain"/>
    <property type="match status" value="2"/>
</dbReference>
<dbReference type="HAMAP" id="MF_00050">
    <property type="entry name" value="EF_Ts"/>
    <property type="match status" value="1"/>
</dbReference>
<dbReference type="InterPro" id="IPR036402">
    <property type="entry name" value="EF-Ts_dimer_sf"/>
</dbReference>
<dbReference type="InterPro" id="IPR001816">
    <property type="entry name" value="Transl_elong_EFTs/EF1B"/>
</dbReference>
<dbReference type="InterPro" id="IPR014039">
    <property type="entry name" value="Transl_elong_EFTs/EF1B_dimer"/>
</dbReference>
<dbReference type="InterPro" id="IPR018101">
    <property type="entry name" value="Transl_elong_Ts_CS"/>
</dbReference>
<dbReference type="InterPro" id="IPR009060">
    <property type="entry name" value="UBA-like_sf"/>
</dbReference>
<dbReference type="NCBIfam" id="TIGR00116">
    <property type="entry name" value="tsf"/>
    <property type="match status" value="1"/>
</dbReference>
<dbReference type="PANTHER" id="PTHR11741">
    <property type="entry name" value="ELONGATION FACTOR TS"/>
    <property type="match status" value="1"/>
</dbReference>
<dbReference type="PANTHER" id="PTHR11741:SF0">
    <property type="entry name" value="ELONGATION FACTOR TS, MITOCHONDRIAL"/>
    <property type="match status" value="1"/>
</dbReference>
<dbReference type="Pfam" id="PF00889">
    <property type="entry name" value="EF_TS"/>
    <property type="match status" value="1"/>
</dbReference>
<dbReference type="SUPFAM" id="SSF54713">
    <property type="entry name" value="Elongation factor Ts (EF-Ts), dimerisation domain"/>
    <property type="match status" value="2"/>
</dbReference>
<dbReference type="SUPFAM" id="SSF46934">
    <property type="entry name" value="UBA-like"/>
    <property type="match status" value="1"/>
</dbReference>
<dbReference type="PROSITE" id="PS01127">
    <property type="entry name" value="EF_TS_2"/>
    <property type="match status" value="1"/>
</dbReference>
<reference key="1">
    <citation type="submission" date="2006-06" db="EMBL/GenBank/DDBJ databases">
        <title>Complete sequence of Pseudoalteromonas atlantica T6c.</title>
        <authorList>
            <consortium name="US DOE Joint Genome Institute"/>
            <person name="Copeland A."/>
            <person name="Lucas S."/>
            <person name="Lapidus A."/>
            <person name="Barry K."/>
            <person name="Detter J.C."/>
            <person name="Glavina del Rio T."/>
            <person name="Hammon N."/>
            <person name="Israni S."/>
            <person name="Dalin E."/>
            <person name="Tice H."/>
            <person name="Pitluck S."/>
            <person name="Saunders E."/>
            <person name="Brettin T."/>
            <person name="Bruce D."/>
            <person name="Han C."/>
            <person name="Tapia R."/>
            <person name="Gilna P."/>
            <person name="Schmutz J."/>
            <person name="Larimer F."/>
            <person name="Land M."/>
            <person name="Hauser L."/>
            <person name="Kyrpides N."/>
            <person name="Kim E."/>
            <person name="Karls A.C."/>
            <person name="Bartlett D."/>
            <person name="Higgins B.P."/>
            <person name="Richardson P."/>
        </authorList>
    </citation>
    <scope>NUCLEOTIDE SEQUENCE [LARGE SCALE GENOMIC DNA]</scope>
    <source>
        <strain>T6c / ATCC BAA-1087</strain>
    </source>
</reference>
<comment type="function">
    <text evidence="1">Associates with the EF-Tu.GDP complex and induces the exchange of GDP to GTP. It remains bound to the aminoacyl-tRNA.EF-Tu.GTP complex up to the GTP hydrolysis stage on the ribosome.</text>
</comment>
<comment type="subcellular location">
    <subcellularLocation>
        <location evidence="1">Cytoplasm</location>
    </subcellularLocation>
</comment>
<comment type="similarity">
    <text evidence="1">Belongs to the EF-Ts family.</text>
</comment>
<feature type="chain" id="PRO_1000006150" description="Elongation factor Ts">
    <location>
        <begin position="1"/>
        <end position="290"/>
    </location>
</feature>
<feature type="region of interest" description="Involved in Mg(2+) ion dislocation from EF-Tu" evidence="1">
    <location>
        <begin position="79"/>
        <end position="82"/>
    </location>
</feature>
<name>EFTS_PSEA6</name>
<keyword id="KW-0963">Cytoplasm</keyword>
<keyword id="KW-0251">Elongation factor</keyword>
<keyword id="KW-0648">Protein biosynthesis</keyword>
<proteinExistence type="inferred from homology"/>
<sequence length="290" mass="30720">MAVTAALVKELRERTAAGMLDCKNALVEANGDIELAIENMRKNGQAKAAKKAGRIAAEGVILTKVANGVATMIELNSETDFVARDEGFIAFGSKLIEVASANKINDIETLNDSVVDGVKVSDARDTLVAKIGENISPRRVISVEGDNLGAYVHGGRIGVIAILQGGDEELAKDIAMHVAAANPQFVKPTDVPAEVVAKEKEIQLDIAMQSGKPADIAEKMVSGRMNKFTSEVSLTGQAFIKDPSTSVAQLLKAKNADVINFVRFEVGEGIEKKEEDFAAEVAAQMAAAKK</sequence>
<organism>
    <name type="scientific">Pseudoalteromonas atlantica (strain T6c / ATCC BAA-1087)</name>
    <dbReference type="NCBI Taxonomy" id="3042615"/>
    <lineage>
        <taxon>Bacteria</taxon>
        <taxon>Pseudomonadati</taxon>
        <taxon>Pseudomonadota</taxon>
        <taxon>Gammaproteobacteria</taxon>
        <taxon>Alteromonadales</taxon>
        <taxon>Alteromonadaceae</taxon>
        <taxon>Paraglaciecola</taxon>
    </lineage>
</organism>
<gene>
    <name evidence="1" type="primary">tsf</name>
    <name type="ordered locus">Patl_1250</name>
</gene>
<evidence type="ECO:0000255" key="1">
    <source>
        <dbReference type="HAMAP-Rule" id="MF_00050"/>
    </source>
</evidence>